<organism>
    <name type="scientific">Desulfatibacillum aliphaticivorans</name>
    <dbReference type="NCBI Taxonomy" id="218208"/>
    <lineage>
        <taxon>Bacteria</taxon>
        <taxon>Pseudomonadati</taxon>
        <taxon>Thermodesulfobacteriota</taxon>
        <taxon>Desulfobacteria</taxon>
        <taxon>Desulfobacterales</taxon>
        <taxon>Desulfatibacillaceae</taxon>
        <taxon>Desulfatibacillum</taxon>
    </lineage>
</organism>
<reference key="1">
    <citation type="journal article" date="2012" name="Environ. Microbiol.">
        <title>The genome sequence of Desulfatibacillum alkenivorans AK-01: a blueprint for anaerobic alkane oxidation.</title>
        <authorList>
            <person name="Callaghan A.V."/>
            <person name="Morris B.E."/>
            <person name="Pereira I.A."/>
            <person name="McInerney M.J."/>
            <person name="Austin R.N."/>
            <person name="Groves J.T."/>
            <person name="Kukor J.J."/>
            <person name="Suflita J.M."/>
            <person name="Young L.Y."/>
            <person name="Zylstra G.J."/>
            <person name="Wawrik B."/>
        </authorList>
    </citation>
    <scope>NUCLEOTIDE SEQUENCE [LARGE SCALE GENOMIC DNA]</scope>
    <source>
        <strain>AK-01</strain>
    </source>
</reference>
<name>MTNA_DESAL</name>
<keyword id="KW-0028">Amino-acid biosynthesis</keyword>
<keyword id="KW-0413">Isomerase</keyword>
<keyword id="KW-0486">Methionine biosynthesis</keyword>
<keyword id="KW-1185">Reference proteome</keyword>
<evidence type="ECO:0000255" key="1">
    <source>
        <dbReference type="HAMAP-Rule" id="MF_01678"/>
    </source>
</evidence>
<evidence type="ECO:0000305" key="2"/>
<comment type="function">
    <text evidence="1">Catalyzes the interconversion of methylthioribose-1-phosphate (MTR-1-P) into methylthioribulose-1-phosphate (MTRu-1-P).</text>
</comment>
<comment type="catalytic activity">
    <reaction evidence="1">
        <text>5-(methylsulfanyl)-alpha-D-ribose 1-phosphate = 5-(methylsulfanyl)-D-ribulose 1-phosphate</text>
        <dbReference type="Rhea" id="RHEA:19989"/>
        <dbReference type="ChEBI" id="CHEBI:58533"/>
        <dbReference type="ChEBI" id="CHEBI:58548"/>
        <dbReference type="EC" id="5.3.1.23"/>
    </reaction>
</comment>
<comment type="pathway">
    <text evidence="1">Amino-acid biosynthesis; L-methionine biosynthesis via salvage pathway; L-methionine from S-methyl-5-thio-alpha-D-ribose 1-phosphate: step 1/6.</text>
</comment>
<comment type="similarity">
    <text evidence="2">Belongs to the eIF-2B alpha/beta/delta subunits family. MtnA subfamily.</text>
</comment>
<feature type="chain" id="PRO_1000187353" description="Methylthioribose-1-phosphate isomerase">
    <location>
        <begin position="1"/>
        <end position="369"/>
    </location>
</feature>
<feature type="active site" description="Proton donor" evidence="1">
    <location>
        <position position="249"/>
    </location>
</feature>
<feature type="binding site" evidence="1">
    <location>
        <begin position="54"/>
        <end position="56"/>
    </location>
    <ligand>
        <name>substrate</name>
    </ligand>
</feature>
<feature type="binding site" evidence="1">
    <location>
        <position position="95"/>
    </location>
    <ligand>
        <name>substrate</name>
    </ligand>
</feature>
<feature type="binding site" evidence="1">
    <location>
        <position position="208"/>
    </location>
    <ligand>
        <name>substrate</name>
    </ligand>
</feature>
<feature type="binding site" evidence="1">
    <location>
        <begin position="259"/>
        <end position="260"/>
    </location>
    <ligand>
        <name>substrate</name>
    </ligand>
</feature>
<feature type="site" description="Transition state stabilizer" evidence="1">
    <location>
        <position position="169"/>
    </location>
</feature>
<accession>B8FLU0</accession>
<dbReference type="EC" id="5.3.1.23" evidence="1"/>
<dbReference type="EMBL" id="CP001322">
    <property type="protein sequence ID" value="ACL05444.1"/>
    <property type="molecule type" value="Genomic_DNA"/>
</dbReference>
<dbReference type="RefSeq" id="WP_015948495.1">
    <property type="nucleotide sequence ID" value="NC_011768.1"/>
</dbReference>
<dbReference type="SMR" id="B8FLU0"/>
<dbReference type="KEGG" id="dal:Dalk_3757"/>
<dbReference type="eggNOG" id="COG0182">
    <property type="taxonomic scope" value="Bacteria"/>
</dbReference>
<dbReference type="HOGENOM" id="CLU_016218_1_2_7"/>
<dbReference type="UniPathway" id="UPA00904">
    <property type="reaction ID" value="UER00874"/>
</dbReference>
<dbReference type="Proteomes" id="UP000000739">
    <property type="component" value="Chromosome"/>
</dbReference>
<dbReference type="GO" id="GO:0046523">
    <property type="term" value="F:S-methyl-5-thioribose-1-phosphate isomerase activity"/>
    <property type="evidence" value="ECO:0007669"/>
    <property type="project" value="UniProtKB-UniRule"/>
</dbReference>
<dbReference type="GO" id="GO:0019509">
    <property type="term" value="P:L-methionine salvage from methylthioadenosine"/>
    <property type="evidence" value="ECO:0007669"/>
    <property type="project" value="UniProtKB-UniRule"/>
</dbReference>
<dbReference type="FunFam" id="1.20.120.420:FF:000003">
    <property type="entry name" value="Methylthioribose-1-phosphate isomerase"/>
    <property type="match status" value="1"/>
</dbReference>
<dbReference type="FunFam" id="3.40.50.10470:FF:000006">
    <property type="entry name" value="Methylthioribose-1-phosphate isomerase"/>
    <property type="match status" value="1"/>
</dbReference>
<dbReference type="Gene3D" id="1.20.120.420">
    <property type="entry name" value="translation initiation factor eif-2b, domain 1"/>
    <property type="match status" value="1"/>
</dbReference>
<dbReference type="Gene3D" id="3.40.50.10470">
    <property type="entry name" value="Translation initiation factor eif-2b, domain 2"/>
    <property type="match status" value="1"/>
</dbReference>
<dbReference type="HAMAP" id="MF_01678">
    <property type="entry name" value="Salvage_MtnA"/>
    <property type="match status" value="1"/>
</dbReference>
<dbReference type="InterPro" id="IPR000649">
    <property type="entry name" value="IF-2B-related"/>
</dbReference>
<dbReference type="InterPro" id="IPR005251">
    <property type="entry name" value="IF-M1Pi"/>
</dbReference>
<dbReference type="InterPro" id="IPR042529">
    <property type="entry name" value="IF_2B-like_C"/>
</dbReference>
<dbReference type="InterPro" id="IPR011559">
    <property type="entry name" value="Initiation_fac_2B_a/b/d"/>
</dbReference>
<dbReference type="InterPro" id="IPR027363">
    <property type="entry name" value="M1Pi_N"/>
</dbReference>
<dbReference type="InterPro" id="IPR037171">
    <property type="entry name" value="NagB/RpiA_transferase-like"/>
</dbReference>
<dbReference type="NCBIfam" id="TIGR00524">
    <property type="entry name" value="eIF-2B_rel"/>
    <property type="match status" value="1"/>
</dbReference>
<dbReference type="NCBIfam" id="NF004326">
    <property type="entry name" value="PRK05720.1"/>
    <property type="match status" value="1"/>
</dbReference>
<dbReference type="NCBIfam" id="TIGR00512">
    <property type="entry name" value="salvage_mtnA"/>
    <property type="match status" value="1"/>
</dbReference>
<dbReference type="PANTHER" id="PTHR43475">
    <property type="entry name" value="METHYLTHIORIBOSE-1-PHOSPHATE ISOMERASE"/>
    <property type="match status" value="1"/>
</dbReference>
<dbReference type="PANTHER" id="PTHR43475:SF1">
    <property type="entry name" value="METHYLTHIORIBOSE-1-PHOSPHATE ISOMERASE"/>
    <property type="match status" value="1"/>
</dbReference>
<dbReference type="Pfam" id="PF01008">
    <property type="entry name" value="IF-2B"/>
    <property type="match status" value="1"/>
</dbReference>
<dbReference type="SUPFAM" id="SSF100950">
    <property type="entry name" value="NagB/RpiA/CoA transferase-like"/>
    <property type="match status" value="1"/>
</dbReference>
<proteinExistence type="inferred from homology"/>
<gene>
    <name evidence="1" type="primary">mtnA</name>
    <name type="ordered locus">Dalk_3757</name>
</gene>
<sequence>MNVNGKWYRAIWPNEHDPETVEIIDQRKLPHRFEIVGLTTVKKTIQAIRDMYVRGAPLIGATGAWGVYLAVVNMKDAENPLQYLKEECFKISNARPTAVNLEWAVKAMEAAILEKSNVEDWIKAAWSKAIEITEAEVKNCRQIGVHGSPLIEEISKNKNGKTVNILTHCNAGWLACVDHGTATAPIYAAFDKGIDVHVWVDETRPLNQGSRLTAWELGQHGVPHTIITDNAGGHLMQHGKVDMVIVGTDRTTHTGDVANKVGTYLKALAAKDNNVPFYVALPSSTIDWEMKNGVKDIPIENRDPDEVRKVWGLHDGHLVDVLVPPEESPALNVAFDVTPARLVTGLITERGLCKASEEGVRSLFPDKMK</sequence>
<protein>
    <recommendedName>
        <fullName evidence="1">Methylthioribose-1-phosphate isomerase</fullName>
        <shortName evidence="1">M1Pi</shortName>
        <shortName evidence="1">MTR-1-P isomerase</shortName>
        <ecNumber evidence="1">5.3.1.23</ecNumber>
    </recommendedName>
    <alternativeName>
        <fullName evidence="1">S-methyl-5-thioribose-1-phosphate isomerase</fullName>
    </alternativeName>
</protein>